<name>FOLD_RUMCH</name>
<gene>
    <name evidence="1" type="primary">folD</name>
    <name type="ordered locus">Ccel_0604</name>
</gene>
<proteinExistence type="inferred from homology"/>
<evidence type="ECO:0000255" key="1">
    <source>
        <dbReference type="HAMAP-Rule" id="MF_01576"/>
    </source>
</evidence>
<dbReference type="EC" id="1.5.1.5" evidence="1"/>
<dbReference type="EC" id="3.5.4.9" evidence="1"/>
<dbReference type="EMBL" id="CP001348">
    <property type="protein sequence ID" value="ACL74985.1"/>
    <property type="molecule type" value="Genomic_DNA"/>
</dbReference>
<dbReference type="RefSeq" id="WP_015924154.1">
    <property type="nucleotide sequence ID" value="NC_011898.1"/>
</dbReference>
<dbReference type="SMR" id="B8I761"/>
<dbReference type="STRING" id="394503.Ccel_0604"/>
<dbReference type="KEGG" id="cce:Ccel_0604"/>
<dbReference type="eggNOG" id="COG0190">
    <property type="taxonomic scope" value="Bacteria"/>
</dbReference>
<dbReference type="HOGENOM" id="CLU_034045_2_1_9"/>
<dbReference type="OrthoDB" id="9803580at2"/>
<dbReference type="UniPathway" id="UPA00193"/>
<dbReference type="Proteomes" id="UP000001349">
    <property type="component" value="Chromosome"/>
</dbReference>
<dbReference type="GO" id="GO:0005829">
    <property type="term" value="C:cytosol"/>
    <property type="evidence" value="ECO:0007669"/>
    <property type="project" value="TreeGrafter"/>
</dbReference>
<dbReference type="GO" id="GO:0004477">
    <property type="term" value="F:methenyltetrahydrofolate cyclohydrolase activity"/>
    <property type="evidence" value="ECO:0007669"/>
    <property type="project" value="UniProtKB-UniRule"/>
</dbReference>
<dbReference type="GO" id="GO:0004488">
    <property type="term" value="F:methylenetetrahydrofolate dehydrogenase (NADP+) activity"/>
    <property type="evidence" value="ECO:0007669"/>
    <property type="project" value="UniProtKB-UniRule"/>
</dbReference>
<dbReference type="GO" id="GO:0000105">
    <property type="term" value="P:L-histidine biosynthetic process"/>
    <property type="evidence" value="ECO:0007669"/>
    <property type="project" value="UniProtKB-KW"/>
</dbReference>
<dbReference type="GO" id="GO:0009086">
    <property type="term" value="P:methionine biosynthetic process"/>
    <property type="evidence" value="ECO:0007669"/>
    <property type="project" value="UniProtKB-KW"/>
</dbReference>
<dbReference type="GO" id="GO:0006164">
    <property type="term" value="P:purine nucleotide biosynthetic process"/>
    <property type="evidence" value="ECO:0007669"/>
    <property type="project" value="UniProtKB-KW"/>
</dbReference>
<dbReference type="GO" id="GO:0035999">
    <property type="term" value="P:tetrahydrofolate interconversion"/>
    <property type="evidence" value="ECO:0007669"/>
    <property type="project" value="UniProtKB-UniRule"/>
</dbReference>
<dbReference type="CDD" id="cd01080">
    <property type="entry name" value="NAD_bind_m-THF_DH_Cyclohyd"/>
    <property type="match status" value="1"/>
</dbReference>
<dbReference type="FunFam" id="3.40.50.10860:FF:000001">
    <property type="entry name" value="Bifunctional protein FolD"/>
    <property type="match status" value="1"/>
</dbReference>
<dbReference type="FunFam" id="3.40.50.720:FF:000094">
    <property type="entry name" value="Bifunctional protein FolD"/>
    <property type="match status" value="1"/>
</dbReference>
<dbReference type="Gene3D" id="3.40.50.10860">
    <property type="entry name" value="Leucine Dehydrogenase, chain A, domain 1"/>
    <property type="match status" value="1"/>
</dbReference>
<dbReference type="Gene3D" id="3.40.50.720">
    <property type="entry name" value="NAD(P)-binding Rossmann-like Domain"/>
    <property type="match status" value="1"/>
</dbReference>
<dbReference type="HAMAP" id="MF_01576">
    <property type="entry name" value="THF_DHG_CYH"/>
    <property type="match status" value="1"/>
</dbReference>
<dbReference type="InterPro" id="IPR046346">
    <property type="entry name" value="Aminoacid_DH-like_N_sf"/>
</dbReference>
<dbReference type="InterPro" id="IPR036291">
    <property type="entry name" value="NAD(P)-bd_dom_sf"/>
</dbReference>
<dbReference type="InterPro" id="IPR000672">
    <property type="entry name" value="THF_DH/CycHdrlase"/>
</dbReference>
<dbReference type="InterPro" id="IPR020630">
    <property type="entry name" value="THF_DH/CycHdrlase_cat_dom"/>
</dbReference>
<dbReference type="InterPro" id="IPR020867">
    <property type="entry name" value="THF_DH/CycHdrlase_CS"/>
</dbReference>
<dbReference type="InterPro" id="IPR020631">
    <property type="entry name" value="THF_DH/CycHdrlase_NAD-bd_dom"/>
</dbReference>
<dbReference type="NCBIfam" id="NF008058">
    <property type="entry name" value="PRK10792.1"/>
    <property type="match status" value="1"/>
</dbReference>
<dbReference type="NCBIfam" id="NF010783">
    <property type="entry name" value="PRK14186.1"/>
    <property type="match status" value="1"/>
</dbReference>
<dbReference type="PANTHER" id="PTHR48099:SF5">
    <property type="entry name" value="C-1-TETRAHYDROFOLATE SYNTHASE, CYTOPLASMIC"/>
    <property type="match status" value="1"/>
</dbReference>
<dbReference type="PANTHER" id="PTHR48099">
    <property type="entry name" value="C-1-TETRAHYDROFOLATE SYNTHASE, CYTOPLASMIC-RELATED"/>
    <property type="match status" value="1"/>
</dbReference>
<dbReference type="Pfam" id="PF00763">
    <property type="entry name" value="THF_DHG_CYH"/>
    <property type="match status" value="1"/>
</dbReference>
<dbReference type="Pfam" id="PF02882">
    <property type="entry name" value="THF_DHG_CYH_C"/>
    <property type="match status" value="1"/>
</dbReference>
<dbReference type="PRINTS" id="PR00085">
    <property type="entry name" value="THFDHDRGNASE"/>
</dbReference>
<dbReference type="SUPFAM" id="SSF53223">
    <property type="entry name" value="Aminoacid dehydrogenase-like, N-terminal domain"/>
    <property type="match status" value="1"/>
</dbReference>
<dbReference type="SUPFAM" id="SSF51735">
    <property type="entry name" value="NAD(P)-binding Rossmann-fold domains"/>
    <property type="match status" value="1"/>
</dbReference>
<dbReference type="PROSITE" id="PS00766">
    <property type="entry name" value="THF_DHG_CYH_1"/>
    <property type="match status" value="1"/>
</dbReference>
<protein>
    <recommendedName>
        <fullName evidence="1">Bifunctional protein FolD</fullName>
    </recommendedName>
    <domain>
        <recommendedName>
            <fullName evidence="1">Methylenetetrahydrofolate dehydrogenase</fullName>
            <ecNumber evidence="1">1.5.1.5</ecNumber>
        </recommendedName>
    </domain>
    <domain>
        <recommendedName>
            <fullName evidence="1">Methenyltetrahydrofolate cyclohydrolase</fullName>
            <ecNumber evidence="1">3.5.4.9</ecNumber>
        </recommendedName>
    </domain>
</protein>
<comment type="function">
    <text evidence="1">Catalyzes the oxidation of 5,10-methylenetetrahydrofolate to 5,10-methenyltetrahydrofolate and then the hydrolysis of 5,10-methenyltetrahydrofolate to 10-formyltetrahydrofolate.</text>
</comment>
<comment type="catalytic activity">
    <reaction evidence="1">
        <text>(6R)-5,10-methylene-5,6,7,8-tetrahydrofolate + NADP(+) = (6R)-5,10-methenyltetrahydrofolate + NADPH</text>
        <dbReference type="Rhea" id="RHEA:22812"/>
        <dbReference type="ChEBI" id="CHEBI:15636"/>
        <dbReference type="ChEBI" id="CHEBI:57455"/>
        <dbReference type="ChEBI" id="CHEBI:57783"/>
        <dbReference type="ChEBI" id="CHEBI:58349"/>
        <dbReference type="EC" id="1.5.1.5"/>
    </reaction>
</comment>
<comment type="catalytic activity">
    <reaction evidence="1">
        <text>(6R)-5,10-methenyltetrahydrofolate + H2O = (6R)-10-formyltetrahydrofolate + H(+)</text>
        <dbReference type="Rhea" id="RHEA:23700"/>
        <dbReference type="ChEBI" id="CHEBI:15377"/>
        <dbReference type="ChEBI" id="CHEBI:15378"/>
        <dbReference type="ChEBI" id="CHEBI:57455"/>
        <dbReference type="ChEBI" id="CHEBI:195366"/>
        <dbReference type="EC" id="3.5.4.9"/>
    </reaction>
</comment>
<comment type="pathway">
    <text evidence="1">One-carbon metabolism; tetrahydrofolate interconversion.</text>
</comment>
<comment type="subunit">
    <text evidence="1">Homodimer.</text>
</comment>
<comment type="similarity">
    <text evidence="1">Belongs to the tetrahydrofolate dehydrogenase/cyclohydrolase family.</text>
</comment>
<accession>B8I761</accession>
<reference key="1">
    <citation type="submission" date="2009-01" db="EMBL/GenBank/DDBJ databases">
        <title>Complete sequence of Clostridium cellulolyticum H10.</title>
        <authorList>
            <consortium name="US DOE Joint Genome Institute"/>
            <person name="Lucas S."/>
            <person name="Copeland A."/>
            <person name="Lapidus A."/>
            <person name="Glavina del Rio T."/>
            <person name="Dalin E."/>
            <person name="Tice H."/>
            <person name="Bruce D."/>
            <person name="Goodwin L."/>
            <person name="Pitluck S."/>
            <person name="Chertkov O."/>
            <person name="Saunders E."/>
            <person name="Brettin T."/>
            <person name="Detter J.C."/>
            <person name="Han C."/>
            <person name="Larimer F."/>
            <person name="Land M."/>
            <person name="Hauser L."/>
            <person name="Kyrpides N."/>
            <person name="Ivanova N."/>
            <person name="Zhou J."/>
            <person name="Richardson P."/>
        </authorList>
    </citation>
    <scope>NUCLEOTIDE SEQUENCE [LARGE SCALE GENOMIC DNA]</scope>
    <source>
        <strain>ATCC 35319 / DSM 5812 / JCM 6584 / H10</strain>
    </source>
</reference>
<sequence>MSAKVLNGTELAAKVKAGLKAKIDELKSKGINPGLAVIIVGDDPASRVYVNHKKNDCTEIGIKSFEYALPESTSEEELLDLIETLNNDASVNGILVQLPIPKHINEEKVIAAISPDKDADCFHPMNVGKLMIGKPEFLPCTPAGVVELLEENGIEISGKNCVVVGRSNIVGKPQAILLLAKNATVTICHSKTANIEEVCRSADVLVVAIGKSEFIKPEFVKPGAVVIDVGVSRGADGKLVGDVQFAEVAEIASAITKVTGGVGPMTRAMLMKNTYKAVLLQNGL</sequence>
<organism>
    <name type="scientific">Ruminiclostridium cellulolyticum (strain ATCC 35319 / DSM 5812 / JCM 6584 / H10)</name>
    <name type="common">Clostridium cellulolyticum</name>
    <dbReference type="NCBI Taxonomy" id="394503"/>
    <lineage>
        <taxon>Bacteria</taxon>
        <taxon>Bacillati</taxon>
        <taxon>Bacillota</taxon>
        <taxon>Clostridia</taxon>
        <taxon>Eubacteriales</taxon>
        <taxon>Oscillospiraceae</taxon>
        <taxon>Ruminiclostridium</taxon>
    </lineage>
</organism>
<keyword id="KW-0028">Amino-acid biosynthesis</keyword>
<keyword id="KW-0368">Histidine biosynthesis</keyword>
<keyword id="KW-0378">Hydrolase</keyword>
<keyword id="KW-0486">Methionine biosynthesis</keyword>
<keyword id="KW-0511">Multifunctional enzyme</keyword>
<keyword id="KW-0521">NADP</keyword>
<keyword id="KW-0554">One-carbon metabolism</keyword>
<keyword id="KW-0560">Oxidoreductase</keyword>
<keyword id="KW-0658">Purine biosynthesis</keyword>
<keyword id="KW-1185">Reference proteome</keyword>
<feature type="chain" id="PRO_1000185605" description="Bifunctional protein FolD">
    <location>
        <begin position="1"/>
        <end position="284"/>
    </location>
</feature>
<feature type="binding site" evidence="1">
    <location>
        <begin position="165"/>
        <end position="167"/>
    </location>
    <ligand>
        <name>NADP(+)</name>
        <dbReference type="ChEBI" id="CHEBI:58349"/>
    </ligand>
</feature>
<feature type="binding site" evidence="1">
    <location>
        <position position="190"/>
    </location>
    <ligand>
        <name>NADP(+)</name>
        <dbReference type="ChEBI" id="CHEBI:58349"/>
    </ligand>
</feature>
<feature type="binding site" evidence="1">
    <location>
        <position position="231"/>
    </location>
    <ligand>
        <name>NADP(+)</name>
        <dbReference type="ChEBI" id="CHEBI:58349"/>
    </ligand>
</feature>